<proteinExistence type="evidence at transcript level"/>
<sequence>MPGGGVTVKDVNQQEFVRALAAFLKKSGKLKVPDWVDIVKLAKHKELAPCDDNWFYIRAASTVRHLYLRGGVGVGSMIKIYGGRKRNGVCPSHFSVGSKNVARKVLQALEALKMVEKDPNGGRRLTPQGTRDLDRIAGQVAAASKKS</sequence>
<keyword id="KW-0963">Cytoplasm</keyword>
<keyword id="KW-0539">Nucleus</keyword>
<keyword id="KW-0687">Ribonucleoprotein</keyword>
<keyword id="KW-0689">Ribosomal protein</keyword>
<accession>Q90YQ4</accession>
<organism>
    <name type="scientific">Ictalurus punctatus</name>
    <name type="common">Channel catfish</name>
    <name type="synonym">Silurus punctatus</name>
    <dbReference type="NCBI Taxonomy" id="7998"/>
    <lineage>
        <taxon>Eukaryota</taxon>
        <taxon>Metazoa</taxon>
        <taxon>Chordata</taxon>
        <taxon>Craniata</taxon>
        <taxon>Vertebrata</taxon>
        <taxon>Euteleostomi</taxon>
        <taxon>Actinopterygii</taxon>
        <taxon>Neopterygii</taxon>
        <taxon>Teleostei</taxon>
        <taxon>Ostariophysi</taxon>
        <taxon>Siluriformes</taxon>
        <taxon>Ictaluridae</taxon>
        <taxon>Ictalurus</taxon>
    </lineage>
</organism>
<protein>
    <recommendedName>
        <fullName evidence="2">Small ribosomal subunit protein eS19</fullName>
    </recommendedName>
    <alternativeName>
        <fullName>40S ribosomal protein S19</fullName>
    </alternativeName>
</protein>
<feature type="chain" id="PRO_0000153816" description="Small ribosomal subunit protein eS19">
    <location>
        <begin position="1"/>
        <end position="147"/>
    </location>
</feature>
<dbReference type="EMBL" id="AF402828">
    <property type="protein sequence ID" value="AAK95202.1"/>
    <property type="molecule type" value="mRNA"/>
</dbReference>
<dbReference type="RefSeq" id="NP_001187082.1">
    <property type="nucleotide sequence ID" value="NM_001200153.1"/>
</dbReference>
<dbReference type="RefSeq" id="XP_017319830.1">
    <property type="nucleotide sequence ID" value="XM_017464341.3"/>
</dbReference>
<dbReference type="SMR" id="Q90YQ4"/>
<dbReference type="STRING" id="7998.ENSIPUP00000004032"/>
<dbReference type="GeneID" id="100304571"/>
<dbReference type="KEGG" id="ipu:100304571"/>
<dbReference type="CTD" id="6223"/>
<dbReference type="OMA" id="WAPFVKT"/>
<dbReference type="OrthoDB" id="428974at2759"/>
<dbReference type="Proteomes" id="UP000221080">
    <property type="component" value="Chromosome 1"/>
</dbReference>
<dbReference type="GO" id="GO:0022627">
    <property type="term" value="C:cytosolic small ribosomal subunit"/>
    <property type="evidence" value="ECO:0007669"/>
    <property type="project" value="TreeGrafter"/>
</dbReference>
<dbReference type="GO" id="GO:0005634">
    <property type="term" value="C:nucleus"/>
    <property type="evidence" value="ECO:0007669"/>
    <property type="project" value="UniProtKB-SubCell"/>
</dbReference>
<dbReference type="GO" id="GO:0003723">
    <property type="term" value="F:RNA binding"/>
    <property type="evidence" value="ECO:0007669"/>
    <property type="project" value="TreeGrafter"/>
</dbReference>
<dbReference type="GO" id="GO:0003735">
    <property type="term" value="F:structural constituent of ribosome"/>
    <property type="evidence" value="ECO:0007669"/>
    <property type="project" value="InterPro"/>
</dbReference>
<dbReference type="GO" id="GO:0000028">
    <property type="term" value="P:ribosomal small subunit assembly"/>
    <property type="evidence" value="ECO:0007669"/>
    <property type="project" value="TreeGrafter"/>
</dbReference>
<dbReference type="GO" id="GO:0006412">
    <property type="term" value="P:translation"/>
    <property type="evidence" value="ECO:0007669"/>
    <property type="project" value="InterPro"/>
</dbReference>
<dbReference type="FunFam" id="1.10.10.10:FF:000255">
    <property type="entry name" value="40S ribosomal protein S19"/>
    <property type="match status" value="1"/>
</dbReference>
<dbReference type="Gene3D" id="1.10.10.10">
    <property type="entry name" value="Winged helix-like DNA-binding domain superfamily/Winged helix DNA-binding domain"/>
    <property type="match status" value="1"/>
</dbReference>
<dbReference type="InterPro" id="IPR001266">
    <property type="entry name" value="Ribosomal_eS19"/>
</dbReference>
<dbReference type="InterPro" id="IPR018277">
    <property type="entry name" value="Ribosomal_eS19_CS"/>
</dbReference>
<dbReference type="InterPro" id="IPR036388">
    <property type="entry name" value="WH-like_DNA-bd_sf"/>
</dbReference>
<dbReference type="InterPro" id="IPR036390">
    <property type="entry name" value="WH_DNA-bd_sf"/>
</dbReference>
<dbReference type="PANTHER" id="PTHR11710">
    <property type="entry name" value="40S RIBOSOMAL PROTEIN S19"/>
    <property type="match status" value="1"/>
</dbReference>
<dbReference type="PANTHER" id="PTHR11710:SF0">
    <property type="entry name" value="40S RIBOSOMAL PROTEIN S19"/>
    <property type="match status" value="1"/>
</dbReference>
<dbReference type="Pfam" id="PF01090">
    <property type="entry name" value="Ribosomal_S19e"/>
    <property type="match status" value="1"/>
</dbReference>
<dbReference type="SMART" id="SM01413">
    <property type="entry name" value="Ribosomal_S19e"/>
    <property type="match status" value="1"/>
</dbReference>
<dbReference type="SUPFAM" id="SSF46785">
    <property type="entry name" value="Winged helix' DNA-binding domain"/>
    <property type="match status" value="1"/>
</dbReference>
<dbReference type="PROSITE" id="PS00628">
    <property type="entry name" value="RIBOSOMAL_S19E"/>
    <property type="match status" value="1"/>
</dbReference>
<evidence type="ECO:0000250" key="1">
    <source>
        <dbReference type="UniProtKB" id="P39019"/>
    </source>
</evidence>
<evidence type="ECO:0000305" key="2"/>
<gene>
    <name type="primary">rps19</name>
</gene>
<comment type="function">
    <text evidence="1">Component of the small ribosomal subunit. The ribosome is a large ribonucleoprotein complex responsible for the synthesis of proteins in the cell. Required for pre-rRNA processing and maturation of 40S ribosomal subunits.</text>
</comment>
<comment type="subunit">
    <text evidence="1">Component of the small ribosomal subunit.</text>
</comment>
<comment type="subcellular location">
    <subcellularLocation>
        <location evidence="1">Cytoplasm</location>
    </subcellularLocation>
    <subcellularLocation>
        <location evidence="1">Nucleus</location>
    </subcellularLocation>
</comment>
<comment type="similarity">
    <text evidence="2">Belongs to the eukaryotic ribosomal protein eS19 family.</text>
</comment>
<name>RS19_ICTPU</name>
<reference key="1">
    <citation type="journal article" date="2002" name="Gene">
        <title>Translational machinery of channel catfish: I. A transcriptomic approach to the analysis of 32 40S ribosomal protein genes and their expression.</title>
        <authorList>
            <person name="Karsi A."/>
            <person name="Patterson A."/>
            <person name="Feng J."/>
            <person name="Liu Z.-J."/>
        </authorList>
    </citation>
    <scope>NUCLEOTIDE SEQUENCE [MRNA]</scope>
</reference>